<sequence length="175" mass="17866">MDRAAKADLVATLNGVFSTTSLVVVAHYKGLTVADMQKLRSQMKQAGATVKVAKNRLANIALDGTDVASIKPLLKGPTLLAYSSDPVAAAKVAVDFAKANDKLVILGGAMGATALNPDGVKALATLPSLDELRAKIVGLVQAPATKIAQVVNAPAAKLARVFGAYADSAKTDEAA</sequence>
<proteinExistence type="inferred from homology"/>
<reference key="1">
    <citation type="submission" date="2009-01" db="EMBL/GenBank/DDBJ databases">
        <title>Complete sequence of chromosome of Methylobacterium nodulans ORS 2060.</title>
        <authorList>
            <consortium name="US DOE Joint Genome Institute"/>
            <person name="Lucas S."/>
            <person name="Copeland A."/>
            <person name="Lapidus A."/>
            <person name="Glavina del Rio T."/>
            <person name="Dalin E."/>
            <person name="Tice H."/>
            <person name="Bruce D."/>
            <person name="Goodwin L."/>
            <person name="Pitluck S."/>
            <person name="Sims D."/>
            <person name="Brettin T."/>
            <person name="Detter J.C."/>
            <person name="Han C."/>
            <person name="Larimer F."/>
            <person name="Land M."/>
            <person name="Hauser L."/>
            <person name="Kyrpides N."/>
            <person name="Ivanova N."/>
            <person name="Marx C.J."/>
            <person name="Richardson P."/>
        </authorList>
    </citation>
    <scope>NUCLEOTIDE SEQUENCE [LARGE SCALE GENOMIC DNA]</scope>
    <source>
        <strain>LMG 21967 / CNCM I-2342 / ORS 2060</strain>
    </source>
</reference>
<protein>
    <recommendedName>
        <fullName evidence="1">Large ribosomal subunit protein uL10</fullName>
    </recommendedName>
    <alternativeName>
        <fullName evidence="2">50S ribosomal protein L10</fullName>
    </alternativeName>
</protein>
<organism>
    <name type="scientific">Methylobacterium nodulans (strain LMG 21967 / CNCM I-2342 / ORS 2060)</name>
    <dbReference type="NCBI Taxonomy" id="460265"/>
    <lineage>
        <taxon>Bacteria</taxon>
        <taxon>Pseudomonadati</taxon>
        <taxon>Pseudomonadota</taxon>
        <taxon>Alphaproteobacteria</taxon>
        <taxon>Hyphomicrobiales</taxon>
        <taxon>Methylobacteriaceae</taxon>
        <taxon>Methylobacterium</taxon>
    </lineage>
</organism>
<gene>
    <name evidence="1" type="primary">rplJ</name>
    <name type="ordered locus">Mnod_1898</name>
</gene>
<evidence type="ECO:0000255" key="1">
    <source>
        <dbReference type="HAMAP-Rule" id="MF_00362"/>
    </source>
</evidence>
<evidence type="ECO:0000305" key="2"/>
<name>RL10_METNO</name>
<accession>B8IS75</accession>
<feature type="chain" id="PRO_1000195555" description="Large ribosomal subunit protein uL10">
    <location>
        <begin position="1"/>
        <end position="175"/>
    </location>
</feature>
<comment type="function">
    <text evidence="1">Forms part of the ribosomal stalk, playing a central role in the interaction of the ribosome with GTP-bound translation factors.</text>
</comment>
<comment type="subunit">
    <text evidence="1">Part of the ribosomal stalk of the 50S ribosomal subunit. The N-terminus interacts with L11 and the large rRNA to form the base of the stalk. The C-terminus forms an elongated spine to which L12 dimers bind in a sequential fashion forming a multimeric L10(L12)X complex.</text>
</comment>
<comment type="similarity">
    <text evidence="1">Belongs to the universal ribosomal protein uL10 family.</text>
</comment>
<keyword id="KW-1185">Reference proteome</keyword>
<keyword id="KW-0687">Ribonucleoprotein</keyword>
<keyword id="KW-0689">Ribosomal protein</keyword>
<keyword id="KW-0694">RNA-binding</keyword>
<keyword id="KW-0699">rRNA-binding</keyword>
<dbReference type="EMBL" id="CP001349">
    <property type="protein sequence ID" value="ACL56887.1"/>
    <property type="molecule type" value="Genomic_DNA"/>
</dbReference>
<dbReference type="RefSeq" id="WP_015928578.1">
    <property type="nucleotide sequence ID" value="NC_011894.1"/>
</dbReference>
<dbReference type="SMR" id="B8IS75"/>
<dbReference type="STRING" id="460265.Mnod_1898"/>
<dbReference type="KEGG" id="mno:Mnod_1898"/>
<dbReference type="eggNOG" id="COG0244">
    <property type="taxonomic scope" value="Bacteria"/>
</dbReference>
<dbReference type="HOGENOM" id="CLU_092227_0_0_5"/>
<dbReference type="OrthoDB" id="9791972at2"/>
<dbReference type="Proteomes" id="UP000008207">
    <property type="component" value="Chromosome"/>
</dbReference>
<dbReference type="GO" id="GO:0015934">
    <property type="term" value="C:large ribosomal subunit"/>
    <property type="evidence" value="ECO:0007669"/>
    <property type="project" value="InterPro"/>
</dbReference>
<dbReference type="GO" id="GO:0070180">
    <property type="term" value="F:large ribosomal subunit rRNA binding"/>
    <property type="evidence" value="ECO:0007669"/>
    <property type="project" value="UniProtKB-UniRule"/>
</dbReference>
<dbReference type="GO" id="GO:0003735">
    <property type="term" value="F:structural constituent of ribosome"/>
    <property type="evidence" value="ECO:0007669"/>
    <property type="project" value="InterPro"/>
</dbReference>
<dbReference type="GO" id="GO:0006412">
    <property type="term" value="P:translation"/>
    <property type="evidence" value="ECO:0007669"/>
    <property type="project" value="UniProtKB-UniRule"/>
</dbReference>
<dbReference type="CDD" id="cd05797">
    <property type="entry name" value="Ribosomal_L10"/>
    <property type="match status" value="1"/>
</dbReference>
<dbReference type="Gene3D" id="3.30.70.1730">
    <property type="match status" value="1"/>
</dbReference>
<dbReference type="Gene3D" id="6.10.250.290">
    <property type="match status" value="1"/>
</dbReference>
<dbReference type="HAMAP" id="MF_00362">
    <property type="entry name" value="Ribosomal_uL10"/>
    <property type="match status" value="1"/>
</dbReference>
<dbReference type="InterPro" id="IPR001790">
    <property type="entry name" value="Ribosomal_uL10"/>
</dbReference>
<dbReference type="InterPro" id="IPR043141">
    <property type="entry name" value="Ribosomal_uL10-like_sf"/>
</dbReference>
<dbReference type="InterPro" id="IPR022973">
    <property type="entry name" value="Ribosomal_uL10_bac"/>
</dbReference>
<dbReference type="InterPro" id="IPR047865">
    <property type="entry name" value="Ribosomal_uL10_bac_type"/>
</dbReference>
<dbReference type="InterPro" id="IPR002363">
    <property type="entry name" value="Ribosomal_uL10_CS_bac"/>
</dbReference>
<dbReference type="NCBIfam" id="NF000955">
    <property type="entry name" value="PRK00099.1-1"/>
    <property type="match status" value="1"/>
</dbReference>
<dbReference type="PANTHER" id="PTHR11560">
    <property type="entry name" value="39S RIBOSOMAL PROTEIN L10, MITOCHONDRIAL"/>
    <property type="match status" value="1"/>
</dbReference>
<dbReference type="Pfam" id="PF00466">
    <property type="entry name" value="Ribosomal_L10"/>
    <property type="match status" value="1"/>
</dbReference>
<dbReference type="SUPFAM" id="SSF160369">
    <property type="entry name" value="Ribosomal protein L10-like"/>
    <property type="match status" value="1"/>
</dbReference>
<dbReference type="PROSITE" id="PS01109">
    <property type="entry name" value="RIBOSOMAL_L10"/>
    <property type="match status" value="1"/>
</dbReference>